<gene>
    <name evidence="1" type="primary">ligB</name>
    <name type="ordered locus">UTI89_C4191</name>
</gene>
<name>LIGB_ECOUT</name>
<sequence length="560" mass="63228">MKVWMAILISILCWQSSAWAVCPAWSPARAQEEISRLQQQIKQWDDDYWKEGKSEVEDGVYDQLSARLTQWQRCFGNETRDVMMPPLNGAVMHPVAHTGVRKMADKNALSLWMRERSDLWVQPKVDGVAVTLVYRDGKLNKAISRGNGLKGEDWTQKVRLISAVPQTVSGPLANSTLQGEIFLQREGHIQQQMGGINARAKVAGLMMRQGNSDTLNSLAVFVWAWPDGPHLMTDRLKDLATAGFTLTQTYTRAVKNADEVAHVRNEWWKAKLPFVTDGVVVRAAKEPESRHWLPGQAEWLVAWKYQPVAQVAEVKAIQFAVGKSGKISVVASLAPVMLDDKKVQRVNIGSVRRWQEWDIAPGDQILVSLAGQGIPRIDDVVWRGAERTKPTPPENRFNSLTCYFASDVCQEQFISRLVWLGSKQVLGLDGIGEAGWRALHQTHRFEHIFSWLLLTPEQLQNTPGIAKSKSAQLWHQFNLARQQPFTRWVMAMGIPLTRAALNASDERSWSQLLFSTEQFWQQQPGTGSGRARQVIEWKENAQIKKLGSWLAAQQITGFEP</sequence>
<dbReference type="EC" id="6.5.1.2" evidence="1"/>
<dbReference type="EMBL" id="CP000243">
    <property type="protein sequence ID" value="ABE09619.1"/>
    <property type="status" value="ALT_INIT"/>
    <property type="molecule type" value="Genomic_DNA"/>
</dbReference>
<dbReference type="RefSeq" id="WP_001363072.1">
    <property type="nucleotide sequence ID" value="NZ_CP064825.1"/>
</dbReference>
<dbReference type="SMR" id="Q1R4U5"/>
<dbReference type="KEGG" id="eci:UTI89_C4191"/>
<dbReference type="HOGENOM" id="CLU_489786_0_0_6"/>
<dbReference type="Proteomes" id="UP000001952">
    <property type="component" value="Chromosome"/>
</dbReference>
<dbReference type="GO" id="GO:0003911">
    <property type="term" value="F:DNA ligase (NAD+) activity"/>
    <property type="evidence" value="ECO:0007669"/>
    <property type="project" value="UniProtKB-UniRule"/>
</dbReference>
<dbReference type="GO" id="GO:0006281">
    <property type="term" value="P:DNA repair"/>
    <property type="evidence" value="ECO:0007669"/>
    <property type="project" value="UniProtKB-KW"/>
</dbReference>
<dbReference type="GO" id="GO:0006260">
    <property type="term" value="P:DNA replication"/>
    <property type="evidence" value="ECO:0007669"/>
    <property type="project" value="UniProtKB-KW"/>
</dbReference>
<dbReference type="FunFam" id="1.10.287.610:FF:000003">
    <property type="entry name" value="DNA ligase B"/>
    <property type="match status" value="1"/>
</dbReference>
<dbReference type="FunFam" id="2.40.50.140:FF:000139">
    <property type="entry name" value="DNA ligase B"/>
    <property type="match status" value="1"/>
</dbReference>
<dbReference type="FunFam" id="3.30.470.30:FF:000007">
    <property type="entry name" value="DNA ligase B"/>
    <property type="match status" value="1"/>
</dbReference>
<dbReference type="Gene3D" id="3.30.470.30">
    <property type="entry name" value="DNA ligase/mRNA capping enzyme"/>
    <property type="match status" value="1"/>
</dbReference>
<dbReference type="Gene3D" id="1.10.287.610">
    <property type="entry name" value="Helix hairpin bin"/>
    <property type="match status" value="1"/>
</dbReference>
<dbReference type="Gene3D" id="2.40.50.140">
    <property type="entry name" value="Nucleic acid-binding proteins"/>
    <property type="match status" value="1"/>
</dbReference>
<dbReference type="HAMAP" id="MF_01587">
    <property type="entry name" value="DNA_ligase_B"/>
    <property type="match status" value="1"/>
</dbReference>
<dbReference type="InterPro" id="IPR018239">
    <property type="entry name" value="DNA_ligase_AS"/>
</dbReference>
<dbReference type="InterPro" id="IPR020923">
    <property type="entry name" value="DNA_ligase_B"/>
</dbReference>
<dbReference type="InterPro" id="IPR033136">
    <property type="entry name" value="DNA_ligase_CS"/>
</dbReference>
<dbReference type="InterPro" id="IPR013839">
    <property type="entry name" value="DNAligase_adenylation"/>
</dbReference>
<dbReference type="InterPro" id="IPR013840">
    <property type="entry name" value="DNAligase_N"/>
</dbReference>
<dbReference type="InterPro" id="IPR012340">
    <property type="entry name" value="NA-bd_OB-fold"/>
</dbReference>
<dbReference type="InterPro" id="IPR050326">
    <property type="entry name" value="NAD_dep_DNA_ligaseB"/>
</dbReference>
<dbReference type="InterPro" id="IPR004150">
    <property type="entry name" value="NAD_DNA_ligase_OB"/>
</dbReference>
<dbReference type="InterPro" id="IPR010994">
    <property type="entry name" value="RuvA_2-like"/>
</dbReference>
<dbReference type="NCBIfam" id="NF005987">
    <property type="entry name" value="PRK08097.1"/>
    <property type="match status" value="1"/>
</dbReference>
<dbReference type="PANTHER" id="PTHR47810">
    <property type="entry name" value="DNA LIGASE"/>
    <property type="match status" value="1"/>
</dbReference>
<dbReference type="PANTHER" id="PTHR47810:SF1">
    <property type="entry name" value="DNA LIGASE B"/>
    <property type="match status" value="1"/>
</dbReference>
<dbReference type="Pfam" id="PF01653">
    <property type="entry name" value="DNA_ligase_aden"/>
    <property type="match status" value="1"/>
</dbReference>
<dbReference type="Pfam" id="PF03120">
    <property type="entry name" value="DNA_ligase_OB"/>
    <property type="match status" value="1"/>
</dbReference>
<dbReference type="SMART" id="SM00532">
    <property type="entry name" value="LIGANc"/>
    <property type="match status" value="1"/>
</dbReference>
<dbReference type="SUPFAM" id="SSF56091">
    <property type="entry name" value="DNA ligase/mRNA capping enzyme, catalytic domain"/>
    <property type="match status" value="1"/>
</dbReference>
<dbReference type="SUPFAM" id="SSF50249">
    <property type="entry name" value="Nucleic acid-binding proteins"/>
    <property type="match status" value="1"/>
</dbReference>
<dbReference type="SUPFAM" id="SSF47781">
    <property type="entry name" value="RuvA domain 2-like"/>
    <property type="match status" value="1"/>
</dbReference>
<dbReference type="PROSITE" id="PS01055">
    <property type="entry name" value="DNA_LIGASE_N1"/>
    <property type="match status" value="1"/>
</dbReference>
<dbReference type="PROSITE" id="PS01056">
    <property type="entry name" value="DNA_LIGASE_N2"/>
    <property type="match status" value="1"/>
</dbReference>
<keyword id="KW-0227">DNA damage</keyword>
<keyword id="KW-0234">DNA repair</keyword>
<keyword id="KW-0235">DNA replication</keyword>
<keyword id="KW-0436">Ligase</keyword>
<keyword id="KW-0520">NAD</keyword>
<reference key="1">
    <citation type="journal article" date="2006" name="Proc. Natl. Acad. Sci. U.S.A.">
        <title>Identification of genes subject to positive selection in uropathogenic strains of Escherichia coli: a comparative genomics approach.</title>
        <authorList>
            <person name="Chen S.L."/>
            <person name="Hung C.-S."/>
            <person name="Xu J."/>
            <person name="Reigstad C.S."/>
            <person name="Magrini V."/>
            <person name="Sabo A."/>
            <person name="Blasiar D."/>
            <person name="Bieri T."/>
            <person name="Meyer R.R."/>
            <person name="Ozersky P."/>
            <person name="Armstrong J.R."/>
            <person name="Fulton R.S."/>
            <person name="Latreille J.P."/>
            <person name="Spieth J."/>
            <person name="Hooton T.M."/>
            <person name="Mardis E.R."/>
            <person name="Hultgren S.J."/>
            <person name="Gordon J.I."/>
        </authorList>
    </citation>
    <scope>NUCLEOTIDE SEQUENCE [LARGE SCALE GENOMIC DNA]</scope>
    <source>
        <strain>UTI89 / UPEC</strain>
    </source>
</reference>
<comment type="function">
    <text evidence="1">Catalyzes the formation of phosphodiester linkages between 5'-phosphoryl and 3'-hydroxyl groups in double-stranded DNA using NAD as a coenzyme and as the energy source for the reaction.</text>
</comment>
<comment type="catalytic activity">
    <reaction evidence="1">
        <text>NAD(+) + (deoxyribonucleotide)n-3'-hydroxyl + 5'-phospho-(deoxyribonucleotide)m = (deoxyribonucleotide)n+m + AMP + beta-nicotinamide D-nucleotide.</text>
        <dbReference type="EC" id="6.5.1.2"/>
    </reaction>
</comment>
<comment type="similarity">
    <text evidence="1">Belongs to the NAD-dependent DNA ligase family. LigB subfamily.</text>
</comment>
<comment type="sequence caution" evidence="2">
    <conflict type="erroneous initiation">
        <sequence resource="EMBL-CDS" id="ABE09619"/>
    </conflict>
</comment>
<organism>
    <name type="scientific">Escherichia coli (strain UTI89 / UPEC)</name>
    <dbReference type="NCBI Taxonomy" id="364106"/>
    <lineage>
        <taxon>Bacteria</taxon>
        <taxon>Pseudomonadati</taxon>
        <taxon>Pseudomonadota</taxon>
        <taxon>Gammaproteobacteria</taxon>
        <taxon>Enterobacterales</taxon>
        <taxon>Enterobacteriaceae</taxon>
        <taxon>Escherichia</taxon>
    </lineage>
</organism>
<protein>
    <recommendedName>
        <fullName evidence="1">DNA ligase B</fullName>
        <ecNumber evidence="1">6.5.1.2</ecNumber>
    </recommendedName>
    <alternativeName>
        <fullName evidence="1">Polydeoxyribonucleotide synthase [NAD(+)] B</fullName>
    </alternativeName>
</protein>
<accession>Q1R4U5</accession>
<feature type="chain" id="PRO_0000313537" description="DNA ligase B">
    <location>
        <begin position="1"/>
        <end position="560"/>
    </location>
</feature>
<feature type="active site" description="N6-AMP-lysine intermediate" evidence="1">
    <location>
        <position position="124"/>
    </location>
</feature>
<proteinExistence type="inferred from homology"/>
<evidence type="ECO:0000255" key="1">
    <source>
        <dbReference type="HAMAP-Rule" id="MF_01587"/>
    </source>
</evidence>
<evidence type="ECO:0000305" key="2"/>